<protein>
    <recommendedName>
        <fullName evidence="1">UPF0301 protein Bphyt_0868</fullName>
    </recommendedName>
</protein>
<sequence length="192" mass="20633">MSKSTDRINLTNQFLIAMPNMADPTFSGTVVYLCDHSERGALGLVINRPTDIDLQALFSRIDLKLEIEPLLHVPVYFGGPVQTERGFVLHDPKDGNAYTSSMSVPGGLEMTTSKDVLEAVASGTGPERFLLTLGHAGWGAGQLEEEISKNGWLTVEADPKIVFDVPAEERLEAALALLGINLSMLSGEAGHA</sequence>
<feature type="chain" id="PRO_1000198260" description="UPF0301 protein Bphyt_0868">
    <location>
        <begin position="1"/>
        <end position="192"/>
    </location>
</feature>
<name>Y868_PARPJ</name>
<comment type="similarity">
    <text evidence="1">Belongs to the UPF0301 (AlgH) family.</text>
</comment>
<gene>
    <name type="ordered locus">Bphyt_0868</name>
</gene>
<accession>B2T0I4</accession>
<evidence type="ECO:0000255" key="1">
    <source>
        <dbReference type="HAMAP-Rule" id="MF_00758"/>
    </source>
</evidence>
<dbReference type="EMBL" id="CP001052">
    <property type="protein sequence ID" value="ACD15289.1"/>
    <property type="molecule type" value="Genomic_DNA"/>
</dbReference>
<dbReference type="RefSeq" id="WP_007178990.1">
    <property type="nucleotide sequence ID" value="NC_010681.1"/>
</dbReference>
<dbReference type="SMR" id="B2T0I4"/>
<dbReference type="STRING" id="398527.Bphyt_0868"/>
<dbReference type="KEGG" id="bpy:Bphyt_0868"/>
<dbReference type="eggNOG" id="COG1678">
    <property type="taxonomic scope" value="Bacteria"/>
</dbReference>
<dbReference type="HOGENOM" id="CLU_057596_1_0_4"/>
<dbReference type="OrthoDB" id="9807486at2"/>
<dbReference type="Proteomes" id="UP000001739">
    <property type="component" value="Chromosome 1"/>
</dbReference>
<dbReference type="GO" id="GO:0005829">
    <property type="term" value="C:cytosol"/>
    <property type="evidence" value="ECO:0007669"/>
    <property type="project" value="TreeGrafter"/>
</dbReference>
<dbReference type="Gene3D" id="3.40.1740.10">
    <property type="entry name" value="VC0467-like"/>
    <property type="match status" value="1"/>
</dbReference>
<dbReference type="HAMAP" id="MF_00758">
    <property type="entry name" value="UPF0301"/>
    <property type="match status" value="1"/>
</dbReference>
<dbReference type="InterPro" id="IPR003774">
    <property type="entry name" value="AlgH-like"/>
</dbReference>
<dbReference type="NCBIfam" id="NF001266">
    <property type="entry name" value="PRK00228.1-1"/>
    <property type="match status" value="1"/>
</dbReference>
<dbReference type="NCBIfam" id="NF001267">
    <property type="entry name" value="PRK00228.1-2"/>
    <property type="match status" value="1"/>
</dbReference>
<dbReference type="PANTHER" id="PTHR30327">
    <property type="entry name" value="UNCHARACTERIZED PROTEIN YQGE"/>
    <property type="match status" value="1"/>
</dbReference>
<dbReference type="PANTHER" id="PTHR30327:SF1">
    <property type="entry name" value="UPF0301 PROTEIN YQGE"/>
    <property type="match status" value="1"/>
</dbReference>
<dbReference type="Pfam" id="PF02622">
    <property type="entry name" value="DUF179"/>
    <property type="match status" value="1"/>
</dbReference>
<dbReference type="SUPFAM" id="SSF143456">
    <property type="entry name" value="VC0467-like"/>
    <property type="match status" value="1"/>
</dbReference>
<proteinExistence type="inferred from homology"/>
<reference key="1">
    <citation type="journal article" date="2011" name="J. Bacteriol.">
        <title>Complete genome sequence of the plant growth-promoting endophyte Burkholderia phytofirmans strain PsJN.</title>
        <authorList>
            <person name="Weilharter A."/>
            <person name="Mitter B."/>
            <person name="Shin M.V."/>
            <person name="Chain P.S."/>
            <person name="Nowak J."/>
            <person name="Sessitsch A."/>
        </authorList>
    </citation>
    <scope>NUCLEOTIDE SEQUENCE [LARGE SCALE GENOMIC DNA]</scope>
    <source>
        <strain>DSM 17436 / LMG 22146 / PsJN</strain>
    </source>
</reference>
<organism>
    <name type="scientific">Paraburkholderia phytofirmans (strain DSM 17436 / LMG 22146 / PsJN)</name>
    <name type="common">Burkholderia phytofirmans</name>
    <dbReference type="NCBI Taxonomy" id="398527"/>
    <lineage>
        <taxon>Bacteria</taxon>
        <taxon>Pseudomonadati</taxon>
        <taxon>Pseudomonadota</taxon>
        <taxon>Betaproteobacteria</taxon>
        <taxon>Burkholderiales</taxon>
        <taxon>Burkholderiaceae</taxon>
        <taxon>Paraburkholderia</taxon>
    </lineage>
</organism>